<organism>
    <name type="scientific">Dickeya chrysanthemi (strain Ech1591)</name>
    <name type="common">Dickeya zeae (strain Ech1591)</name>
    <dbReference type="NCBI Taxonomy" id="561229"/>
    <lineage>
        <taxon>Bacteria</taxon>
        <taxon>Pseudomonadati</taxon>
        <taxon>Pseudomonadota</taxon>
        <taxon>Gammaproteobacteria</taxon>
        <taxon>Enterobacterales</taxon>
        <taxon>Pectobacteriaceae</taxon>
        <taxon>Dickeya</taxon>
    </lineage>
</organism>
<comment type="function">
    <text evidence="1">Part of the twin-arginine translocation (Tat) system that transports large folded proteins containing a characteristic twin-arginine motif in their signal peptide across membranes. TatE shares overlapping functions with TatA.</text>
</comment>
<comment type="subcellular location">
    <subcellularLocation>
        <location evidence="1">Cell inner membrane</location>
        <topology evidence="1">Single-pass membrane protein</topology>
    </subcellularLocation>
</comment>
<comment type="similarity">
    <text evidence="1">Belongs to the TatA/E family. TatE subfamily.</text>
</comment>
<feature type="chain" id="PRO_0000412961" description="Probable Sec-independent protein translocase protein TatE">
    <location>
        <begin position="1"/>
        <end position="69"/>
    </location>
</feature>
<feature type="transmembrane region" description="Helical" evidence="1">
    <location>
        <begin position="1"/>
        <end position="21"/>
    </location>
</feature>
<feature type="region of interest" description="Disordered" evidence="2">
    <location>
        <begin position="45"/>
        <end position="69"/>
    </location>
</feature>
<feature type="compositionally biased region" description="Basic and acidic residues" evidence="2">
    <location>
        <begin position="54"/>
        <end position="69"/>
    </location>
</feature>
<keyword id="KW-0997">Cell inner membrane</keyword>
<keyword id="KW-1003">Cell membrane</keyword>
<keyword id="KW-0472">Membrane</keyword>
<keyword id="KW-0653">Protein transport</keyword>
<keyword id="KW-0811">Translocation</keyword>
<keyword id="KW-0812">Transmembrane</keyword>
<keyword id="KW-1133">Transmembrane helix</keyword>
<keyword id="KW-0813">Transport</keyword>
<name>TATE_DICC1</name>
<sequence length="69" mass="7204">MEGISIAKLLVIGALIVLLFGTNKLRSLGGDLGAAIKGFKKAMNDDQPAAKSSAQDEHPAAISETRPKE</sequence>
<accession>C6CQJ7</accession>
<gene>
    <name evidence="1" type="primary">tatE</name>
    <name type="ordered locus">Dd1591_2971</name>
</gene>
<protein>
    <recommendedName>
        <fullName evidence="1">Probable Sec-independent protein translocase protein TatE</fullName>
    </recommendedName>
</protein>
<dbReference type="EMBL" id="CP001655">
    <property type="protein sequence ID" value="ACT07793.1"/>
    <property type="molecule type" value="Genomic_DNA"/>
</dbReference>
<dbReference type="RefSeq" id="WP_012770646.1">
    <property type="nucleotide sequence ID" value="NC_012912.1"/>
</dbReference>
<dbReference type="SMR" id="C6CQJ7"/>
<dbReference type="STRING" id="561229.Dd1591_2971"/>
<dbReference type="GeneID" id="60867461"/>
<dbReference type="KEGG" id="dze:Dd1591_2971"/>
<dbReference type="eggNOG" id="COG1826">
    <property type="taxonomic scope" value="Bacteria"/>
</dbReference>
<dbReference type="HOGENOM" id="CLU_086034_5_3_6"/>
<dbReference type="OrthoDB" id="7066617at2"/>
<dbReference type="Proteomes" id="UP000002735">
    <property type="component" value="Chromosome"/>
</dbReference>
<dbReference type="GO" id="GO:0033281">
    <property type="term" value="C:TAT protein transport complex"/>
    <property type="evidence" value="ECO:0007669"/>
    <property type="project" value="UniProtKB-UniRule"/>
</dbReference>
<dbReference type="GO" id="GO:0008320">
    <property type="term" value="F:protein transmembrane transporter activity"/>
    <property type="evidence" value="ECO:0007669"/>
    <property type="project" value="UniProtKB-UniRule"/>
</dbReference>
<dbReference type="GO" id="GO:0043953">
    <property type="term" value="P:protein transport by the Tat complex"/>
    <property type="evidence" value="ECO:0007669"/>
    <property type="project" value="UniProtKB-UniRule"/>
</dbReference>
<dbReference type="Gene3D" id="1.20.5.3310">
    <property type="match status" value="1"/>
</dbReference>
<dbReference type="HAMAP" id="MF_00236">
    <property type="entry name" value="TatA_E"/>
    <property type="match status" value="1"/>
</dbReference>
<dbReference type="HAMAP" id="MF_00903">
    <property type="entry name" value="TatE"/>
    <property type="match status" value="1"/>
</dbReference>
<dbReference type="InterPro" id="IPR003369">
    <property type="entry name" value="TatA/B/E"/>
</dbReference>
<dbReference type="InterPro" id="IPR006312">
    <property type="entry name" value="TatA/E"/>
</dbReference>
<dbReference type="InterPro" id="IPR024905">
    <property type="entry name" value="TatE"/>
</dbReference>
<dbReference type="NCBIfam" id="NF002448">
    <property type="entry name" value="PRK01614.1"/>
    <property type="match status" value="1"/>
</dbReference>
<dbReference type="NCBIfam" id="NF002960">
    <property type="entry name" value="PRK03625.1"/>
    <property type="match status" value="1"/>
</dbReference>
<dbReference type="NCBIfam" id="TIGR01411">
    <property type="entry name" value="tatAE"/>
    <property type="match status" value="1"/>
</dbReference>
<dbReference type="PANTHER" id="PTHR42982">
    <property type="entry name" value="SEC-INDEPENDENT PROTEIN TRANSLOCASE PROTEIN TATA"/>
    <property type="match status" value="1"/>
</dbReference>
<dbReference type="PANTHER" id="PTHR42982:SF5">
    <property type="entry name" value="SEC-INDEPENDENT PROTEIN TRANSLOCASE PROTEIN TATE"/>
    <property type="match status" value="1"/>
</dbReference>
<dbReference type="Pfam" id="PF02416">
    <property type="entry name" value="TatA_B_E"/>
    <property type="match status" value="1"/>
</dbReference>
<reference key="1">
    <citation type="submission" date="2009-06" db="EMBL/GenBank/DDBJ databases">
        <title>Complete sequence of Dickeya zeae Ech1591.</title>
        <authorList>
            <consortium name="US DOE Joint Genome Institute"/>
            <person name="Lucas S."/>
            <person name="Copeland A."/>
            <person name="Lapidus A."/>
            <person name="Glavina del Rio T."/>
            <person name="Tice H."/>
            <person name="Bruce D."/>
            <person name="Goodwin L."/>
            <person name="Pitluck S."/>
            <person name="Chertkov O."/>
            <person name="Brettin T."/>
            <person name="Detter J.C."/>
            <person name="Han C."/>
            <person name="Larimer F."/>
            <person name="Land M."/>
            <person name="Hauser L."/>
            <person name="Kyrpides N."/>
            <person name="Ovchinnikova G."/>
            <person name="Balakrishnan V."/>
            <person name="Glasner J."/>
            <person name="Perna N.T."/>
        </authorList>
    </citation>
    <scope>NUCLEOTIDE SEQUENCE [LARGE SCALE GENOMIC DNA]</scope>
    <source>
        <strain>Ech1591</strain>
    </source>
</reference>
<proteinExistence type="inferred from homology"/>
<evidence type="ECO:0000255" key="1">
    <source>
        <dbReference type="HAMAP-Rule" id="MF_00903"/>
    </source>
</evidence>
<evidence type="ECO:0000256" key="2">
    <source>
        <dbReference type="SAM" id="MobiDB-lite"/>
    </source>
</evidence>